<keyword id="KW-0614">Plasmid</keyword>
<reference key="1">
    <citation type="journal article" date="1992" name="Nucleic Acids Res.">
        <title>Modular organization of related Archaeal plasmids encoding different restriction-modification systems in Methanobacterium thermoformicicum.</title>
        <authorList>
            <person name="Noelling J."/>
            <person name="van Eeden F.J.M."/>
            <person name="Eggen R.I.L."/>
            <person name="de Vos W.M."/>
        </authorList>
    </citation>
    <scope>NUCLEOTIDE SEQUENCE [GENOMIC DNA]</scope>
    <source>
        <strain>DSM 3848 / THF</strain>
    </source>
</reference>
<sequence>MVVKIRRAGNICRLFEEDLSQYRGEYEDCVDYLPEILFLLAELLRSESLEEVDRLKVAAALGYSVSPLDMFPEEIYGPYSFLGDLFVSLTVLRDVVDAIGLNTVENLWRGEVRLFDLLEDCYNRVSKELGAKKKLFLKHVGLDLIG</sequence>
<feature type="chain" id="PRO_0000066433" description="Uncharacterized protein ORF9">
    <location>
        <begin position="1"/>
        <end position="146"/>
    </location>
</feature>
<accession>P29586</accession>
<proteinExistence type="predicted"/>
<organism>
    <name type="scientific">Methanothermobacter thermautotrophicus</name>
    <name type="common">Methanobacterium thermoformicicum</name>
    <dbReference type="NCBI Taxonomy" id="145262"/>
    <lineage>
        <taxon>Archaea</taxon>
        <taxon>Methanobacteriati</taxon>
        <taxon>Methanobacteriota</taxon>
        <taxon>Methanomada group</taxon>
        <taxon>Methanobacteria</taxon>
        <taxon>Methanobacteriales</taxon>
        <taxon>Methanobacteriaceae</taxon>
        <taxon>Methanothermobacter</taxon>
    </lineage>
</organism>
<name>YPV9_METTF</name>
<protein>
    <recommendedName>
        <fullName>Uncharacterized protein ORF9</fullName>
    </recommendedName>
</protein>
<dbReference type="EMBL" id="X68366">
    <property type="protein sequence ID" value="CAA48434.1"/>
    <property type="molecule type" value="Genomic_DNA"/>
</dbReference>
<dbReference type="PIR" id="S30311">
    <property type="entry name" value="S26446"/>
</dbReference>
<dbReference type="RefSeq" id="NP_039763.1">
    <property type="nucleotide sequence ID" value="NC_001336.1"/>
</dbReference>
<dbReference type="RefSeq" id="WP_010889849.1">
    <property type="nucleotide sequence ID" value="NC_001336.1"/>
</dbReference>
<geneLocation type="plasmid">
    <name>pFV1</name>
</geneLocation>